<keyword id="KW-0963">Cytoplasm</keyword>
<keyword id="KW-0396">Initiation factor</keyword>
<keyword id="KW-0648">Protein biosynthesis</keyword>
<keyword id="KW-1185">Reference proteome</keyword>
<proteinExistence type="inferred from homology"/>
<dbReference type="EMBL" id="CM002238">
    <property type="protein sequence ID" value="EAA33647.1"/>
    <property type="molecule type" value="Genomic_DNA"/>
</dbReference>
<dbReference type="RefSeq" id="XP_962883.1">
    <property type="nucleotide sequence ID" value="XM_957790.3"/>
</dbReference>
<dbReference type="SMR" id="Q7SB62"/>
<dbReference type="STRING" id="367110.Q7SB62"/>
<dbReference type="PaxDb" id="5141-EFNCRP00000005967"/>
<dbReference type="EnsemblFungi" id="EAA33647">
    <property type="protein sequence ID" value="EAA33647"/>
    <property type="gene ID" value="NCU06279"/>
</dbReference>
<dbReference type="GeneID" id="3879022"/>
<dbReference type="KEGG" id="ncr:NCU06279"/>
<dbReference type="VEuPathDB" id="FungiDB:NCU06279"/>
<dbReference type="HOGENOM" id="CLU_029210_2_0_1"/>
<dbReference type="InParanoid" id="Q7SB62"/>
<dbReference type="OMA" id="AGWFIRN"/>
<dbReference type="OrthoDB" id="15082at2759"/>
<dbReference type="Proteomes" id="UP000001805">
    <property type="component" value="Chromosome 3, Linkage Group III"/>
</dbReference>
<dbReference type="GO" id="GO:0016282">
    <property type="term" value="C:eukaryotic 43S preinitiation complex"/>
    <property type="evidence" value="ECO:0007669"/>
    <property type="project" value="UniProtKB-UniRule"/>
</dbReference>
<dbReference type="GO" id="GO:0033290">
    <property type="term" value="C:eukaryotic 48S preinitiation complex"/>
    <property type="evidence" value="ECO:0007669"/>
    <property type="project" value="UniProtKB-UniRule"/>
</dbReference>
<dbReference type="GO" id="GO:0005852">
    <property type="term" value="C:eukaryotic translation initiation factor 3 complex"/>
    <property type="evidence" value="ECO:0000318"/>
    <property type="project" value="GO_Central"/>
</dbReference>
<dbReference type="GO" id="GO:0003743">
    <property type="term" value="F:translation initiation factor activity"/>
    <property type="evidence" value="ECO:0007669"/>
    <property type="project" value="UniProtKB-UniRule"/>
</dbReference>
<dbReference type="GO" id="GO:0001732">
    <property type="term" value="P:formation of cytoplasmic translation initiation complex"/>
    <property type="evidence" value="ECO:0007669"/>
    <property type="project" value="UniProtKB-UniRule"/>
</dbReference>
<dbReference type="GO" id="GO:0006413">
    <property type="term" value="P:translational initiation"/>
    <property type="evidence" value="ECO:0000318"/>
    <property type="project" value="GO_Central"/>
</dbReference>
<dbReference type="HAMAP" id="MF_03011">
    <property type="entry name" value="eIF3l"/>
    <property type="match status" value="1"/>
</dbReference>
<dbReference type="InterPro" id="IPR019382">
    <property type="entry name" value="eIF3l"/>
</dbReference>
<dbReference type="InterPro" id="IPR000717">
    <property type="entry name" value="PCI_dom"/>
</dbReference>
<dbReference type="PANTHER" id="PTHR13242">
    <property type="entry name" value="EUKARYOTIC TRANSLATION INITIATION FACTOR 3"/>
    <property type="match status" value="1"/>
</dbReference>
<dbReference type="PANTHER" id="PTHR13242:SF0">
    <property type="entry name" value="EUKARYOTIC TRANSLATION INITIATION FACTOR 3 SUBUNIT L"/>
    <property type="match status" value="1"/>
</dbReference>
<dbReference type="Pfam" id="PF10255">
    <property type="entry name" value="Paf67"/>
    <property type="match status" value="1"/>
</dbReference>
<dbReference type="PROSITE" id="PS50250">
    <property type="entry name" value="PCI"/>
    <property type="match status" value="1"/>
</dbReference>
<organism>
    <name type="scientific">Neurospora crassa (strain ATCC 24698 / 74-OR23-1A / CBS 708.71 / DSM 1257 / FGSC 987)</name>
    <dbReference type="NCBI Taxonomy" id="367110"/>
    <lineage>
        <taxon>Eukaryota</taxon>
        <taxon>Fungi</taxon>
        <taxon>Dikarya</taxon>
        <taxon>Ascomycota</taxon>
        <taxon>Pezizomycotina</taxon>
        <taxon>Sordariomycetes</taxon>
        <taxon>Sordariomycetidae</taxon>
        <taxon>Sordariales</taxon>
        <taxon>Sordariaceae</taxon>
        <taxon>Neurospora</taxon>
    </lineage>
</organism>
<reference key="1">
    <citation type="journal article" date="2003" name="Nature">
        <title>The genome sequence of the filamentous fungus Neurospora crassa.</title>
        <authorList>
            <person name="Galagan J.E."/>
            <person name="Calvo S.E."/>
            <person name="Borkovich K.A."/>
            <person name="Selker E.U."/>
            <person name="Read N.D."/>
            <person name="Jaffe D.B."/>
            <person name="FitzHugh W."/>
            <person name="Ma L.-J."/>
            <person name="Smirnov S."/>
            <person name="Purcell S."/>
            <person name="Rehman B."/>
            <person name="Elkins T."/>
            <person name="Engels R."/>
            <person name="Wang S."/>
            <person name="Nielsen C.B."/>
            <person name="Butler J."/>
            <person name="Endrizzi M."/>
            <person name="Qui D."/>
            <person name="Ianakiev P."/>
            <person name="Bell-Pedersen D."/>
            <person name="Nelson M.A."/>
            <person name="Werner-Washburne M."/>
            <person name="Selitrennikoff C.P."/>
            <person name="Kinsey J.A."/>
            <person name="Braun E.L."/>
            <person name="Zelter A."/>
            <person name="Schulte U."/>
            <person name="Kothe G.O."/>
            <person name="Jedd G."/>
            <person name="Mewes H.-W."/>
            <person name="Staben C."/>
            <person name="Marcotte E."/>
            <person name="Greenberg D."/>
            <person name="Roy A."/>
            <person name="Foley K."/>
            <person name="Naylor J."/>
            <person name="Stange-Thomann N."/>
            <person name="Barrett R."/>
            <person name="Gnerre S."/>
            <person name="Kamal M."/>
            <person name="Kamvysselis M."/>
            <person name="Mauceli E.W."/>
            <person name="Bielke C."/>
            <person name="Rudd S."/>
            <person name="Frishman D."/>
            <person name="Krystofova S."/>
            <person name="Rasmussen C."/>
            <person name="Metzenberg R.L."/>
            <person name="Perkins D.D."/>
            <person name="Kroken S."/>
            <person name="Cogoni C."/>
            <person name="Macino G."/>
            <person name="Catcheside D.E.A."/>
            <person name="Li W."/>
            <person name="Pratt R.J."/>
            <person name="Osmani S.A."/>
            <person name="DeSouza C.P.C."/>
            <person name="Glass N.L."/>
            <person name="Orbach M.J."/>
            <person name="Berglund J.A."/>
            <person name="Voelker R."/>
            <person name="Yarden O."/>
            <person name="Plamann M."/>
            <person name="Seiler S."/>
            <person name="Dunlap J.C."/>
            <person name="Radford A."/>
            <person name="Aramayo R."/>
            <person name="Natvig D.O."/>
            <person name="Alex L.A."/>
            <person name="Mannhaupt G."/>
            <person name="Ebbole D.J."/>
            <person name="Freitag M."/>
            <person name="Paulsen I."/>
            <person name="Sachs M.S."/>
            <person name="Lander E.S."/>
            <person name="Nusbaum C."/>
            <person name="Birren B.W."/>
        </authorList>
    </citation>
    <scope>NUCLEOTIDE SEQUENCE [LARGE SCALE GENOMIC DNA]</scope>
    <source>
        <strain>ATCC 24698 / 74-OR23-1A / CBS 708.71 / DSM 1257 / FGSC 987</strain>
    </source>
</reference>
<accession>Q7SB62</accession>
<evidence type="ECO:0000255" key="1">
    <source>
        <dbReference type="HAMAP-Rule" id="MF_03011"/>
    </source>
</evidence>
<evidence type="ECO:0000255" key="2">
    <source>
        <dbReference type="PROSITE-ProRule" id="PRU01185"/>
    </source>
</evidence>
<feature type="chain" id="PRO_0000364268" description="Eukaryotic translation initiation factor 3 subunit L">
    <location>
        <begin position="1"/>
        <end position="474"/>
    </location>
</feature>
<feature type="domain" description="PCI" evidence="2">
    <location>
        <begin position="255"/>
        <end position="449"/>
    </location>
</feature>
<gene>
    <name type="ORF">NCU06279</name>
</gene>
<sequence>MSAFQQAQAPARAIDPDSDVEEEALVNDYKEQVQYEEDDAESTQMSLAAQTDDIQSRLAAAAQPLDYSAGLEVKFSSYDSYCSLFHFILNSEGPVDLEPPSYYWAWDVIDEFIYQFNSFSSYRARIARQGNNEEEIAMLRENPNTWGCYSVLNVLYSLIQKSQITEQLAAMKRNEDPAAVAGEYGSKNLYKMLGYFSIIGLLRVHTLLGDFSLALKTLDDIELNKKAMFARVMAAHFTTYYYVGFSYMMMRRYADAIRMFSHILVYVSRTKNFQKNAQYDSITKKNDQMYALIAICVAFQPTRLDDTIHTALREKYGDQLLKLQRGGPEALPIYEELFRTACPKFISPVPPNFDEPEANIDPIEHHLSVFMDEVKTNMFNPTIKSYLRLYTTMDLKKLAGFLEVKPEELRGWLMVNKQRTKQLRWTDGGLLEGELVNVSDLDYALQGDLIHISEAKVGRKLVDWYLRNLSRTYA</sequence>
<comment type="function">
    <text evidence="1">Component of the eukaryotic translation initiation factor 3 (eIF-3) complex, which is involved in protein synthesis of a specialized repertoire of mRNAs and, together with other initiation factors, stimulates binding of mRNA and methionyl-tRNAi to the 40S ribosome. The eIF-3 complex specifically targets and initiates translation of a subset of mRNAs involved in cell proliferation.</text>
</comment>
<comment type="subunit">
    <text evidence="1">Component of the eukaryotic translation initiation factor 3 (eIF-3) complex.</text>
</comment>
<comment type="subcellular location">
    <subcellularLocation>
        <location evidence="1">Cytoplasm</location>
    </subcellularLocation>
</comment>
<comment type="similarity">
    <text evidence="1">Belongs to the eIF-3 subunit L family.</text>
</comment>
<protein>
    <recommendedName>
        <fullName evidence="1">Eukaryotic translation initiation factor 3 subunit L</fullName>
        <shortName evidence="1">eIF3l</shortName>
    </recommendedName>
</protein>
<name>EIF3L_NEUCR</name>